<feature type="chain" id="PRO_0000354461" description="Large ribosomal subunit protein uL22">
    <location>
        <begin position="1"/>
        <end position="110"/>
    </location>
</feature>
<gene>
    <name evidence="1" type="primary">rplV</name>
    <name type="ordered locus">Daci_0396</name>
</gene>
<proteinExistence type="inferred from homology"/>
<protein>
    <recommendedName>
        <fullName evidence="1">Large ribosomal subunit protein uL22</fullName>
    </recommendedName>
    <alternativeName>
        <fullName evidence="2">50S ribosomal protein L22</fullName>
    </alternativeName>
</protein>
<sequence>MSETRAVLRGVRLSVDKGRLVADLIRGKKVDQALNILTFTQKKAAVIIKKVLESAIANAEHNDGADIDELKVKTIFVEQGTTLKRFTARAKGRGNRISKPTCHVYVTVGN</sequence>
<name>RL22_DELAS</name>
<dbReference type="EMBL" id="CP000884">
    <property type="protein sequence ID" value="ABX33042.1"/>
    <property type="molecule type" value="Genomic_DNA"/>
</dbReference>
<dbReference type="RefSeq" id="WP_012202334.1">
    <property type="nucleotide sequence ID" value="NC_010002.1"/>
</dbReference>
<dbReference type="SMR" id="A9BPS3"/>
<dbReference type="STRING" id="398578.Daci_0396"/>
<dbReference type="GeneID" id="94689738"/>
<dbReference type="KEGG" id="dac:Daci_0396"/>
<dbReference type="eggNOG" id="COG0091">
    <property type="taxonomic scope" value="Bacteria"/>
</dbReference>
<dbReference type="HOGENOM" id="CLU_083987_3_3_4"/>
<dbReference type="Proteomes" id="UP000000784">
    <property type="component" value="Chromosome"/>
</dbReference>
<dbReference type="GO" id="GO:0022625">
    <property type="term" value="C:cytosolic large ribosomal subunit"/>
    <property type="evidence" value="ECO:0007669"/>
    <property type="project" value="TreeGrafter"/>
</dbReference>
<dbReference type="GO" id="GO:0019843">
    <property type="term" value="F:rRNA binding"/>
    <property type="evidence" value="ECO:0007669"/>
    <property type="project" value="UniProtKB-UniRule"/>
</dbReference>
<dbReference type="GO" id="GO:0003735">
    <property type="term" value="F:structural constituent of ribosome"/>
    <property type="evidence" value="ECO:0007669"/>
    <property type="project" value="InterPro"/>
</dbReference>
<dbReference type="GO" id="GO:0006412">
    <property type="term" value="P:translation"/>
    <property type="evidence" value="ECO:0007669"/>
    <property type="project" value="UniProtKB-UniRule"/>
</dbReference>
<dbReference type="CDD" id="cd00336">
    <property type="entry name" value="Ribosomal_L22"/>
    <property type="match status" value="1"/>
</dbReference>
<dbReference type="FunFam" id="3.90.470.10:FF:000001">
    <property type="entry name" value="50S ribosomal protein L22"/>
    <property type="match status" value="1"/>
</dbReference>
<dbReference type="Gene3D" id="3.90.470.10">
    <property type="entry name" value="Ribosomal protein L22/L17"/>
    <property type="match status" value="1"/>
</dbReference>
<dbReference type="HAMAP" id="MF_01331_B">
    <property type="entry name" value="Ribosomal_uL22_B"/>
    <property type="match status" value="1"/>
</dbReference>
<dbReference type="InterPro" id="IPR001063">
    <property type="entry name" value="Ribosomal_uL22"/>
</dbReference>
<dbReference type="InterPro" id="IPR005727">
    <property type="entry name" value="Ribosomal_uL22_bac/chlpt-type"/>
</dbReference>
<dbReference type="InterPro" id="IPR047867">
    <property type="entry name" value="Ribosomal_uL22_bac/org-type"/>
</dbReference>
<dbReference type="InterPro" id="IPR018260">
    <property type="entry name" value="Ribosomal_uL22_CS"/>
</dbReference>
<dbReference type="InterPro" id="IPR036394">
    <property type="entry name" value="Ribosomal_uL22_sf"/>
</dbReference>
<dbReference type="NCBIfam" id="TIGR01044">
    <property type="entry name" value="rplV_bact"/>
    <property type="match status" value="1"/>
</dbReference>
<dbReference type="PANTHER" id="PTHR13501">
    <property type="entry name" value="CHLOROPLAST 50S RIBOSOMAL PROTEIN L22-RELATED"/>
    <property type="match status" value="1"/>
</dbReference>
<dbReference type="PANTHER" id="PTHR13501:SF8">
    <property type="entry name" value="LARGE RIBOSOMAL SUBUNIT PROTEIN UL22M"/>
    <property type="match status" value="1"/>
</dbReference>
<dbReference type="Pfam" id="PF00237">
    <property type="entry name" value="Ribosomal_L22"/>
    <property type="match status" value="1"/>
</dbReference>
<dbReference type="SUPFAM" id="SSF54843">
    <property type="entry name" value="Ribosomal protein L22"/>
    <property type="match status" value="1"/>
</dbReference>
<dbReference type="PROSITE" id="PS00464">
    <property type="entry name" value="RIBOSOMAL_L22"/>
    <property type="match status" value="1"/>
</dbReference>
<keyword id="KW-1185">Reference proteome</keyword>
<keyword id="KW-0687">Ribonucleoprotein</keyword>
<keyword id="KW-0689">Ribosomal protein</keyword>
<keyword id="KW-0694">RNA-binding</keyword>
<keyword id="KW-0699">rRNA-binding</keyword>
<reference key="1">
    <citation type="submission" date="2007-11" db="EMBL/GenBank/DDBJ databases">
        <title>Complete sequence of Delftia acidovorans DSM 14801 / SPH-1.</title>
        <authorList>
            <person name="Copeland A."/>
            <person name="Lucas S."/>
            <person name="Lapidus A."/>
            <person name="Barry K."/>
            <person name="Glavina del Rio T."/>
            <person name="Dalin E."/>
            <person name="Tice H."/>
            <person name="Pitluck S."/>
            <person name="Lowry S."/>
            <person name="Clum A."/>
            <person name="Schmutz J."/>
            <person name="Larimer F."/>
            <person name="Land M."/>
            <person name="Hauser L."/>
            <person name="Kyrpides N."/>
            <person name="Kim E."/>
            <person name="Schleheck D."/>
            <person name="Richardson P."/>
        </authorList>
    </citation>
    <scope>NUCLEOTIDE SEQUENCE [LARGE SCALE GENOMIC DNA]</scope>
    <source>
        <strain>DSM 14801 / SPH-1</strain>
    </source>
</reference>
<comment type="function">
    <text evidence="1">This protein binds specifically to 23S rRNA; its binding is stimulated by other ribosomal proteins, e.g. L4, L17, and L20. It is important during the early stages of 50S assembly. It makes multiple contacts with different domains of the 23S rRNA in the assembled 50S subunit and ribosome (By similarity).</text>
</comment>
<comment type="function">
    <text evidence="1">The globular domain of the protein is located near the polypeptide exit tunnel on the outside of the subunit, while an extended beta-hairpin is found that lines the wall of the exit tunnel in the center of the 70S ribosome.</text>
</comment>
<comment type="subunit">
    <text evidence="1">Part of the 50S ribosomal subunit.</text>
</comment>
<comment type="similarity">
    <text evidence="1">Belongs to the universal ribosomal protein uL22 family.</text>
</comment>
<accession>A9BPS3</accession>
<evidence type="ECO:0000255" key="1">
    <source>
        <dbReference type="HAMAP-Rule" id="MF_01331"/>
    </source>
</evidence>
<evidence type="ECO:0000305" key="2"/>
<organism>
    <name type="scientific">Delftia acidovorans (strain DSM 14801 / SPH-1)</name>
    <dbReference type="NCBI Taxonomy" id="398578"/>
    <lineage>
        <taxon>Bacteria</taxon>
        <taxon>Pseudomonadati</taxon>
        <taxon>Pseudomonadota</taxon>
        <taxon>Betaproteobacteria</taxon>
        <taxon>Burkholderiales</taxon>
        <taxon>Comamonadaceae</taxon>
        <taxon>Delftia</taxon>
    </lineage>
</organism>